<proteinExistence type="inferred from homology"/>
<gene>
    <name evidence="1" type="primary">recX</name>
    <name type="ordered locus">Paes_1807</name>
</gene>
<dbReference type="EMBL" id="CP001108">
    <property type="protein sequence ID" value="ACF46819.1"/>
    <property type="molecule type" value="Genomic_DNA"/>
</dbReference>
<dbReference type="RefSeq" id="WP_012506352.1">
    <property type="nucleotide sequence ID" value="NC_011059.1"/>
</dbReference>
<dbReference type="SMR" id="B4S427"/>
<dbReference type="STRING" id="290512.Paes_1807"/>
<dbReference type="KEGG" id="paa:Paes_1807"/>
<dbReference type="eggNOG" id="COG2137">
    <property type="taxonomic scope" value="Bacteria"/>
</dbReference>
<dbReference type="HOGENOM" id="CLU_066607_3_3_10"/>
<dbReference type="Proteomes" id="UP000002725">
    <property type="component" value="Chromosome"/>
</dbReference>
<dbReference type="GO" id="GO:0005737">
    <property type="term" value="C:cytoplasm"/>
    <property type="evidence" value="ECO:0007669"/>
    <property type="project" value="UniProtKB-SubCell"/>
</dbReference>
<dbReference type="GO" id="GO:0006282">
    <property type="term" value="P:regulation of DNA repair"/>
    <property type="evidence" value="ECO:0007669"/>
    <property type="project" value="UniProtKB-UniRule"/>
</dbReference>
<dbReference type="Gene3D" id="1.10.10.10">
    <property type="entry name" value="Winged helix-like DNA-binding domain superfamily/Winged helix DNA-binding domain"/>
    <property type="match status" value="3"/>
</dbReference>
<dbReference type="HAMAP" id="MF_01114">
    <property type="entry name" value="RecX"/>
    <property type="match status" value="1"/>
</dbReference>
<dbReference type="InterPro" id="IPR053926">
    <property type="entry name" value="RecX_HTH_1st"/>
</dbReference>
<dbReference type="InterPro" id="IPR053924">
    <property type="entry name" value="RecX_HTH_2nd"/>
</dbReference>
<dbReference type="InterPro" id="IPR003783">
    <property type="entry name" value="Regulatory_RecX"/>
</dbReference>
<dbReference type="InterPro" id="IPR036388">
    <property type="entry name" value="WH-like_DNA-bd_sf"/>
</dbReference>
<dbReference type="PANTHER" id="PTHR33602">
    <property type="entry name" value="REGULATORY PROTEIN RECX FAMILY PROTEIN"/>
    <property type="match status" value="1"/>
</dbReference>
<dbReference type="PANTHER" id="PTHR33602:SF1">
    <property type="entry name" value="REGULATORY PROTEIN RECX FAMILY PROTEIN"/>
    <property type="match status" value="1"/>
</dbReference>
<dbReference type="Pfam" id="PF21982">
    <property type="entry name" value="RecX_HTH1"/>
    <property type="match status" value="1"/>
</dbReference>
<dbReference type="Pfam" id="PF02631">
    <property type="entry name" value="RecX_HTH2"/>
    <property type="match status" value="1"/>
</dbReference>
<comment type="function">
    <text evidence="1">Modulates RecA activity.</text>
</comment>
<comment type="subcellular location">
    <subcellularLocation>
        <location evidence="1">Cytoplasm</location>
    </subcellularLocation>
</comment>
<comment type="similarity">
    <text evidence="1">Belongs to the RecX family.</text>
</comment>
<sequence>MSDSDTRKALNRAIGYLGIREHSRQEIRGKLKRNGFSDETIEKVLERLDTLNLLDDLSFARNFIRSRTRVKPSGLYKLRYELRQKGVPDDIAEEALREYDSAAQCLNAALKKMPFLKGDQEHRRKKLHTHLVNRGFDSQTIRQTLDELLTN</sequence>
<reference key="1">
    <citation type="submission" date="2008-06" db="EMBL/GenBank/DDBJ databases">
        <title>Complete sequence of chromosome of Prosthecochloris aestuarii DSM 271.</title>
        <authorList>
            <consortium name="US DOE Joint Genome Institute"/>
            <person name="Lucas S."/>
            <person name="Copeland A."/>
            <person name="Lapidus A."/>
            <person name="Glavina del Rio T."/>
            <person name="Dalin E."/>
            <person name="Tice H."/>
            <person name="Bruce D."/>
            <person name="Goodwin L."/>
            <person name="Pitluck S."/>
            <person name="Schmutz J."/>
            <person name="Larimer F."/>
            <person name="Land M."/>
            <person name="Hauser L."/>
            <person name="Kyrpides N."/>
            <person name="Anderson I."/>
            <person name="Liu Z."/>
            <person name="Li T."/>
            <person name="Zhao F."/>
            <person name="Overmann J."/>
            <person name="Bryant D.A."/>
            <person name="Richardson P."/>
        </authorList>
    </citation>
    <scope>NUCLEOTIDE SEQUENCE [LARGE SCALE GENOMIC DNA]</scope>
    <source>
        <strain>DSM 271 / SK 413</strain>
    </source>
</reference>
<keyword id="KW-0963">Cytoplasm</keyword>
<protein>
    <recommendedName>
        <fullName evidence="1">Regulatory protein RecX</fullName>
    </recommendedName>
</protein>
<organism>
    <name type="scientific">Prosthecochloris aestuarii (strain DSM 271 / SK 413)</name>
    <dbReference type="NCBI Taxonomy" id="290512"/>
    <lineage>
        <taxon>Bacteria</taxon>
        <taxon>Pseudomonadati</taxon>
        <taxon>Chlorobiota</taxon>
        <taxon>Chlorobiia</taxon>
        <taxon>Chlorobiales</taxon>
        <taxon>Chlorobiaceae</taxon>
        <taxon>Prosthecochloris</taxon>
    </lineage>
</organism>
<evidence type="ECO:0000255" key="1">
    <source>
        <dbReference type="HAMAP-Rule" id="MF_01114"/>
    </source>
</evidence>
<name>RECX_PROA2</name>
<feature type="chain" id="PRO_1000137182" description="Regulatory protein RecX">
    <location>
        <begin position="1"/>
        <end position="151"/>
    </location>
</feature>
<accession>B4S427</accession>